<name>OPGG2_SHEON</name>
<sequence>MRLHLTFNHSTPATGRKNTKHTLFFGSMLACIISIISLVVPAYGANVSDEKKAKPFTHDNVIDLAMQLAQKPFKEARKAPKELIDLDYATYGKINYQENAAIWGGTPTKFSVQLFAPGFLYKNLVDIDVVENSRAFPIELTESSFSVPNDTIEKLLTQVGQYAGVRLHYPINDDEVKDEFIMFQGASYFRALSKGQTYGLSNRGLAIDVAQPKGEEYPLFKRFWIERPSKYQTAIVVHALLDSQSVTGAYRFGIYPGAPTRVDVDVTLFPRRDIAHVGLAPLTSMFLYGGLDTPDKPDYRPAVHNSEGLQIDRGNGERLWRPLNNPNKLQISAFGDEDIKGFGLIQRHRNFDYYQDLGANYQQRPSAWIEPLNDWGKGQLILLEIPSNAETNDNIVAYWEPQGGLKQAEPYRYSYRITASNDSPSFTNKARVIRSSKGQKQAKGKELLIDYSNIKPQDIEKITIDASISKGKILSSRIVAHPEINGARIFITFEPESTNVAELRIQLRKDEKPVAATWLYRWNSDDWP</sequence>
<gene>
    <name type="primary">opgG2</name>
    <name type="synonym">mdoG-2</name>
    <name type="ordered locus">SO_2731</name>
</gene>
<dbReference type="EMBL" id="AE014299">
    <property type="protein sequence ID" value="AAN55759.1"/>
    <property type="molecule type" value="Genomic_DNA"/>
</dbReference>
<dbReference type="RefSeq" id="NP_718315.1">
    <property type="nucleotide sequence ID" value="NC_004347.2"/>
</dbReference>
<dbReference type="RefSeq" id="WP_011072674.1">
    <property type="nucleotide sequence ID" value="NC_004347.2"/>
</dbReference>
<dbReference type="SMR" id="Q8EDL2"/>
<dbReference type="STRING" id="211586.SO_2731"/>
<dbReference type="PaxDb" id="211586-SO_2731"/>
<dbReference type="KEGG" id="son:SO_2731"/>
<dbReference type="PATRIC" id="fig|211586.12.peg.2631"/>
<dbReference type="eggNOG" id="COG3131">
    <property type="taxonomic scope" value="Bacteria"/>
</dbReference>
<dbReference type="HOGENOM" id="CLU_023403_2_0_6"/>
<dbReference type="OrthoDB" id="335750at2"/>
<dbReference type="PhylomeDB" id="Q8EDL2"/>
<dbReference type="BioCyc" id="SONE211586:G1GMP-2512-MONOMER"/>
<dbReference type="UniPathway" id="UPA00637"/>
<dbReference type="Proteomes" id="UP000008186">
    <property type="component" value="Chromosome"/>
</dbReference>
<dbReference type="GO" id="GO:0030288">
    <property type="term" value="C:outer membrane-bounded periplasmic space"/>
    <property type="evidence" value="ECO:0000318"/>
    <property type="project" value="GO_Central"/>
</dbReference>
<dbReference type="GO" id="GO:0030246">
    <property type="term" value="F:carbohydrate binding"/>
    <property type="evidence" value="ECO:0007669"/>
    <property type="project" value="InterPro"/>
</dbReference>
<dbReference type="GO" id="GO:0003824">
    <property type="term" value="F:catalytic activity"/>
    <property type="evidence" value="ECO:0007669"/>
    <property type="project" value="InterPro"/>
</dbReference>
<dbReference type="GO" id="GO:0051274">
    <property type="term" value="P:beta-glucan biosynthetic process"/>
    <property type="evidence" value="ECO:0000318"/>
    <property type="project" value="GO_Central"/>
</dbReference>
<dbReference type="FunFam" id="2.70.98.10:FF:000001">
    <property type="entry name" value="Glucans biosynthesis protein G"/>
    <property type="match status" value="1"/>
</dbReference>
<dbReference type="Gene3D" id="2.70.98.10">
    <property type="match status" value="1"/>
</dbReference>
<dbReference type="Gene3D" id="2.60.40.10">
    <property type="entry name" value="Immunoglobulins"/>
    <property type="match status" value="1"/>
</dbReference>
<dbReference type="HAMAP" id="MF_01069">
    <property type="entry name" value="MdoG_OpgG"/>
    <property type="match status" value="1"/>
</dbReference>
<dbReference type="InterPro" id="IPR011013">
    <property type="entry name" value="Gal_mutarotase_sf_dom"/>
</dbReference>
<dbReference type="InterPro" id="IPR014718">
    <property type="entry name" value="GH-type_carb-bd"/>
</dbReference>
<dbReference type="InterPro" id="IPR014438">
    <property type="entry name" value="Glucan_biosyn_MdoG/MdoD"/>
</dbReference>
<dbReference type="InterPro" id="IPR007444">
    <property type="entry name" value="Glucan_biosyn_MdoG_C"/>
</dbReference>
<dbReference type="InterPro" id="IPR013783">
    <property type="entry name" value="Ig-like_fold"/>
</dbReference>
<dbReference type="InterPro" id="IPR014756">
    <property type="entry name" value="Ig_E-set"/>
</dbReference>
<dbReference type="InterPro" id="IPR023704">
    <property type="entry name" value="MdoG_OpgG"/>
</dbReference>
<dbReference type="PANTHER" id="PTHR30504">
    <property type="entry name" value="GLUCANS BIOSYNTHESIS PROTEIN"/>
    <property type="match status" value="1"/>
</dbReference>
<dbReference type="PANTHER" id="PTHR30504:SF2">
    <property type="entry name" value="GLUCANS BIOSYNTHESIS PROTEIN G"/>
    <property type="match status" value="1"/>
</dbReference>
<dbReference type="Pfam" id="PF04349">
    <property type="entry name" value="MdoG"/>
    <property type="match status" value="1"/>
</dbReference>
<dbReference type="PIRSF" id="PIRSF006281">
    <property type="entry name" value="MdoG"/>
    <property type="match status" value="1"/>
</dbReference>
<dbReference type="SUPFAM" id="SSF81296">
    <property type="entry name" value="E set domains"/>
    <property type="match status" value="1"/>
</dbReference>
<dbReference type="SUPFAM" id="SSF74650">
    <property type="entry name" value="Galactose mutarotase-like"/>
    <property type="match status" value="1"/>
</dbReference>
<evidence type="ECO:0000250" key="1"/>
<evidence type="ECO:0000255" key="2"/>
<evidence type="ECO:0000305" key="3"/>
<comment type="function">
    <text evidence="1">Involved in the biosynthesis of osmoregulated periplasmic glucans (OPGs).</text>
</comment>
<comment type="pathway">
    <text>Glycan metabolism; osmoregulated periplasmic glucan (OPG) biosynthesis.</text>
</comment>
<comment type="subcellular location">
    <subcellularLocation>
        <location evidence="1">Periplasm</location>
    </subcellularLocation>
</comment>
<comment type="similarity">
    <text evidence="3">Belongs to the OpgD/OpgG family.</text>
</comment>
<accession>Q8EDL2</accession>
<protein>
    <recommendedName>
        <fullName>Glucans biosynthesis protein G 2</fullName>
    </recommendedName>
</protein>
<proteinExistence type="inferred from homology"/>
<feature type="signal peptide" evidence="2">
    <location>
        <begin position="1"/>
        <end position="44"/>
    </location>
</feature>
<feature type="chain" id="PRO_0000020235" description="Glucans biosynthesis protein G 2">
    <location>
        <begin position="45"/>
        <end position="528"/>
    </location>
</feature>
<keyword id="KW-0574">Periplasm</keyword>
<keyword id="KW-1185">Reference proteome</keyword>
<keyword id="KW-0732">Signal</keyword>
<organism>
    <name type="scientific">Shewanella oneidensis (strain ATCC 700550 / JCM 31522 / CIP 106686 / LMG 19005 / NCIMB 14063 / MR-1)</name>
    <dbReference type="NCBI Taxonomy" id="211586"/>
    <lineage>
        <taxon>Bacteria</taxon>
        <taxon>Pseudomonadati</taxon>
        <taxon>Pseudomonadota</taxon>
        <taxon>Gammaproteobacteria</taxon>
        <taxon>Alteromonadales</taxon>
        <taxon>Shewanellaceae</taxon>
        <taxon>Shewanella</taxon>
    </lineage>
</organism>
<reference key="1">
    <citation type="journal article" date="2002" name="Nat. Biotechnol.">
        <title>Genome sequence of the dissimilatory metal ion-reducing bacterium Shewanella oneidensis.</title>
        <authorList>
            <person name="Heidelberg J.F."/>
            <person name="Paulsen I.T."/>
            <person name="Nelson K.E."/>
            <person name="Gaidos E.J."/>
            <person name="Nelson W.C."/>
            <person name="Read T.D."/>
            <person name="Eisen J.A."/>
            <person name="Seshadri R."/>
            <person name="Ward N.L."/>
            <person name="Methe B.A."/>
            <person name="Clayton R.A."/>
            <person name="Meyer T."/>
            <person name="Tsapin A."/>
            <person name="Scott J."/>
            <person name="Beanan M.J."/>
            <person name="Brinkac L.M."/>
            <person name="Daugherty S.C."/>
            <person name="DeBoy R.T."/>
            <person name="Dodson R.J."/>
            <person name="Durkin A.S."/>
            <person name="Haft D.H."/>
            <person name="Kolonay J.F."/>
            <person name="Madupu R."/>
            <person name="Peterson J.D."/>
            <person name="Umayam L.A."/>
            <person name="White O."/>
            <person name="Wolf A.M."/>
            <person name="Vamathevan J.J."/>
            <person name="Weidman J.F."/>
            <person name="Impraim M."/>
            <person name="Lee K."/>
            <person name="Berry K.J."/>
            <person name="Lee C."/>
            <person name="Mueller J."/>
            <person name="Khouri H.M."/>
            <person name="Gill J."/>
            <person name="Utterback T.R."/>
            <person name="McDonald L.A."/>
            <person name="Feldblyum T.V."/>
            <person name="Smith H.O."/>
            <person name="Venter J.C."/>
            <person name="Nealson K.H."/>
            <person name="Fraser C.M."/>
        </authorList>
    </citation>
    <scope>NUCLEOTIDE SEQUENCE [LARGE SCALE GENOMIC DNA]</scope>
    <source>
        <strain>ATCC 700550 / JCM 31522 / CIP 106686 / LMG 19005 / NCIMB 14063 / MR-1</strain>
    </source>
</reference>